<sequence>MAKLTLKDLELNNKRVLVRVDFNVPLEAGRVTDNTRIRAALPTIEYLLDHGARVILMSHLGRPKGKVKEELRLDPVARELESLLGRQVHKVNDCVGPEVEAAAAALKPGEVLLLENLRFHPEEEKNDPGFARQLASLADVYVNDAFGAAHRAHASTEGVAHYLPAAAGFLLQKEIETLGKALADPERPFVAIIGGAKVSDKISVIRNLLTKVDTLIIGGGMANTFLKAQGYAMGKSLVEEDQVPLAQELIQLAAQKGVKMLLPRDLVVAQEFKADAPHQVVAVNAVPDGWMALDIGPETARAYAGALEGARTVVWNGPMGVFEMEAFAHGTEAVARAVAAVDGMTIVGGGDSVAAVEKMGVAGKIGHISTGGGASLEFLEGKALPGVVALTEK</sequence>
<gene>
    <name evidence="1" type="primary">pgk</name>
    <name type="ordered locus">Moth_0263</name>
</gene>
<comment type="catalytic activity">
    <reaction evidence="1">
        <text>(2R)-3-phosphoglycerate + ATP = (2R)-3-phospho-glyceroyl phosphate + ADP</text>
        <dbReference type="Rhea" id="RHEA:14801"/>
        <dbReference type="ChEBI" id="CHEBI:30616"/>
        <dbReference type="ChEBI" id="CHEBI:57604"/>
        <dbReference type="ChEBI" id="CHEBI:58272"/>
        <dbReference type="ChEBI" id="CHEBI:456216"/>
        <dbReference type="EC" id="2.7.2.3"/>
    </reaction>
</comment>
<comment type="pathway">
    <text evidence="1">Carbohydrate degradation; glycolysis; pyruvate from D-glyceraldehyde 3-phosphate: step 2/5.</text>
</comment>
<comment type="subunit">
    <text evidence="1">Monomer.</text>
</comment>
<comment type="subcellular location">
    <subcellularLocation>
        <location evidence="1">Cytoplasm</location>
    </subcellularLocation>
</comment>
<comment type="similarity">
    <text evidence="1">Belongs to the phosphoglycerate kinase family.</text>
</comment>
<accession>Q2RLU1</accession>
<proteinExistence type="inferred from homology"/>
<dbReference type="EC" id="2.7.2.3" evidence="1"/>
<dbReference type="EMBL" id="CP000232">
    <property type="protein sequence ID" value="ABC18598.1"/>
    <property type="molecule type" value="Genomic_DNA"/>
</dbReference>
<dbReference type="RefSeq" id="YP_429141.1">
    <property type="nucleotide sequence ID" value="NC_007644.1"/>
</dbReference>
<dbReference type="SMR" id="Q2RLU1"/>
<dbReference type="STRING" id="264732.Moth_0263"/>
<dbReference type="EnsemblBacteria" id="ABC18598">
    <property type="protein sequence ID" value="ABC18598"/>
    <property type="gene ID" value="Moth_0263"/>
</dbReference>
<dbReference type="KEGG" id="mta:Moth_0263"/>
<dbReference type="PATRIC" id="fig|264732.11.peg.280"/>
<dbReference type="eggNOG" id="COG0126">
    <property type="taxonomic scope" value="Bacteria"/>
</dbReference>
<dbReference type="HOGENOM" id="CLU_025427_0_2_9"/>
<dbReference type="OrthoDB" id="9808460at2"/>
<dbReference type="UniPathway" id="UPA00109">
    <property type="reaction ID" value="UER00185"/>
</dbReference>
<dbReference type="GO" id="GO:0005829">
    <property type="term" value="C:cytosol"/>
    <property type="evidence" value="ECO:0007669"/>
    <property type="project" value="TreeGrafter"/>
</dbReference>
<dbReference type="GO" id="GO:0043531">
    <property type="term" value="F:ADP binding"/>
    <property type="evidence" value="ECO:0007669"/>
    <property type="project" value="TreeGrafter"/>
</dbReference>
<dbReference type="GO" id="GO:0005524">
    <property type="term" value="F:ATP binding"/>
    <property type="evidence" value="ECO:0007669"/>
    <property type="project" value="UniProtKB-KW"/>
</dbReference>
<dbReference type="GO" id="GO:0004618">
    <property type="term" value="F:phosphoglycerate kinase activity"/>
    <property type="evidence" value="ECO:0007669"/>
    <property type="project" value="UniProtKB-UniRule"/>
</dbReference>
<dbReference type="GO" id="GO:0006094">
    <property type="term" value="P:gluconeogenesis"/>
    <property type="evidence" value="ECO:0007669"/>
    <property type="project" value="TreeGrafter"/>
</dbReference>
<dbReference type="GO" id="GO:0006096">
    <property type="term" value="P:glycolytic process"/>
    <property type="evidence" value="ECO:0007669"/>
    <property type="project" value="UniProtKB-UniRule"/>
</dbReference>
<dbReference type="CDD" id="cd00318">
    <property type="entry name" value="Phosphoglycerate_kinase"/>
    <property type="match status" value="1"/>
</dbReference>
<dbReference type="FunFam" id="3.40.50.1260:FF:000002">
    <property type="entry name" value="Phosphoglycerate kinase"/>
    <property type="match status" value="1"/>
</dbReference>
<dbReference type="FunFam" id="3.40.50.1260:FF:000007">
    <property type="entry name" value="Phosphoglycerate kinase"/>
    <property type="match status" value="1"/>
</dbReference>
<dbReference type="Gene3D" id="3.40.50.1260">
    <property type="entry name" value="Phosphoglycerate kinase, N-terminal domain"/>
    <property type="match status" value="2"/>
</dbReference>
<dbReference type="HAMAP" id="MF_00145">
    <property type="entry name" value="Phosphoglyc_kinase"/>
    <property type="match status" value="1"/>
</dbReference>
<dbReference type="InterPro" id="IPR001576">
    <property type="entry name" value="Phosphoglycerate_kinase"/>
</dbReference>
<dbReference type="InterPro" id="IPR015911">
    <property type="entry name" value="Phosphoglycerate_kinase_CS"/>
</dbReference>
<dbReference type="InterPro" id="IPR015824">
    <property type="entry name" value="Phosphoglycerate_kinase_N"/>
</dbReference>
<dbReference type="InterPro" id="IPR036043">
    <property type="entry name" value="Phosphoglycerate_kinase_sf"/>
</dbReference>
<dbReference type="PANTHER" id="PTHR11406">
    <property type="entry name" value="PHOSPHOGLYCERATE KINASE"/>
    <property type="match status" value="1"/>
</dbReference>
<dbReference type="PANTHER" id="PTHR11406:SF23">
    <property type="entry name" value="PHOSPHOGLYCERATE KINASE 1, CHLOROPLASTIC-RELATED"/>
    <property type="match status" value="1"/>
</dbReference>
<dbReference type="Pfam" id="PF00162">
    <property type="entry name" value="PGK"/>
    <property type="match status" value="1"/>
</dbReference>
<dbReference type="PIRSF" id="PIRSF000724">
    <property type="entry name" value="Pgk"/>
    <property type="match status" value="1"/>
</dbReference>
<dbReference type="PRINTS" id="PR00477">
    <property type="entry name" value="PHGLYCKINASE"/>
</dbReference>
<dbReference type="SUPFAM" id="SSF53748">
    <property type="entry name" value="Phosphoglycerate kinase"/>
    <property type="match status" value="1"/>
</dbReference>
<dbReference type="PROSITE" id="PS00111">
    <property type="entry name" value="PGLYCERATE_KINASE"/>
    <property type="match status" value="1"/>
</dbReference>
<reference key="1">
    <citation type="journal article" date="2008" name="Environ. Microbiol.">
        <title>The complete genome sequence of Moorella thermoacetica (f. Clostridium thermoaceticum).</title>
        <authorList>
            <person name="Pierce E."/>
            <person name="Xie G."/>
            <person name="Barabote R.D."/>
            <person name="Saunders E."/>
            <person name="Han C.S."/>
            <person name="Detter J.C."/>
            <person name="Richardson P."/>
            <person name="Brettin T.S."/>
            <person name="Das A."/>
            <person name="Ljungdahl L.G."/>
            <person name="Ragsdale S.W."/>
        </authorList>
    </citation>
    <scope>NUCLEOTIDE SEQUENCE [LARGE SCALE GENOMIC DNA]</scope>
    <source>
        <strain>ATCC 39073 / JCM 9320</strain>
    </source>
</reference>
<protein>
    <recommendedName>
        <fullName evidence="1">Phosphoglycerate kinase</fullName>
        <ecNumber evidence="1">2.7.2.3</ecNumber>
    </recommendedName>
</protein>
<organism>
    <name type="scientific">Moorella thermoacetica (strain ATCC 39073 / JCM 9320)</name>
    <dbReference type="NCBI Taxonomy" id="264732"/>
    <lineage>
        <taxon>Bacteria</taxon>
        <taxon>Bacillati</taxon>
        <taxon>Bacillota</taxon>
        <taxon>Clostridia</taxon>
        <taxon>Moorellales</taxon>
        <taxon>Moorellaceae</taxon>
        <taxon>Moorella</taxon>
    </lineage>
</organism>
<name>PGK_MOOTA</name>
<keyword id="KW-0067">ATP-binding</keyword>
<keyword id="KW-0963">Cytoplasm</keyword>
<keyword id="KW-0324">Glycolysis</keyword>
<keyword id="KW-0418">Kinase</keyword>
<keyword id="KW-0547">Nucleotide-binding</keyword>
<keyword id="KW-0808">Transferase</keyword>
<feature type="chain" id="PRO_1000058017" description="Phosphoglycerate kinase">
    <location>
        <begin position="1"/>
        <end position="393"/>
    </location>
</feature>
<feature type="binding site" evidence="1">
    <location>
        <begin position="21"/>
        <end position="23"/>
    </location>
    <ligand>
        <name>substrate</name>
    </ligand>
</feature>
<feature type="binding site" evidence="1">
    <location>
        <position position="36"/>
    </location>
    <ligand>
        <name>substrate</name>
    </ligand>
</feature>
<feature type="binding site" evidence="1">
    <location>
        <begin position="59"/>
        <end position="62"/>
    </location>
    <ligand>
        <name>substrate</name>
    </ligand>
</feature>
<feature type="binding site" evidence="1">
    <location>
        <position position="118"/>
    </location>
    <ligand>
        <name>substrate</name>
    </ligand>
</feature>
<feature type="binding site" evidence="1">
    <location>
        <position position="151"/>
    </location>
    <ligand>
        <name>substrate</name>
    </ligand>
</feature>
<feature type="binding site" evidence="1">
    <location>
        <position position="201"/>
    </location>
    <ligand>
        <name>ATP</name>
        <dbReference type="ChEBI" id="CHEBI:30616"/>
    </ligand>
</feature>
<feature type="binding site" evidence="1">
    <location>
        <position position="323"/>
    </location>
    <ligand>
        <name>ATP</name>
        <dbReference type="ChEBI" id="CHEBI:30616"/>
    </ligand>
</feature>
<feature type="binding site" evidence="1">
    <location>
        <begin position="349"/>
        <end position="352"/>
    </location>
    <ligand>
        <name>ATP</name>
        <dbReference type="ChEBI" id="CHEBI:30616"/>
    </ligand>
</feature>
<evidence type="ECO:0000255" key="1">
    <source>
        <dbReference type="HAMAP-Rule" id="MF_00145"/>
    </source>
</evidence>